<name>Y079_PERMH</name>
<gene>
    <name type="ordered locus">PERMA_0079</name>
</gene>
<proteinExistence type="inferred from homology"/>
<reference key="1">
    <citation type="journal article" date="2009" name="J. Bacteriol.">
        <title>Complete and draft genome sequences of six members of the Aquificales.</title>
        <authorList>
            <person name="Reysenbach A.-L."/>
            <person name="Hamamura N."/>
            <person name="Podar M."/>
            <person name="Griffiths E."/>
            <person name="Ferreira S."/>
            <person name="Hochstein R."/>
            <person name="Heidelberg J."/>
            <person name="Johnson J."/>
            <person name="Mead D."/>
            <person name="Pohorille A."/>
            <person name="Sarmiento M."/>
            <person name="Schweighofer K."/>
            <person name="Seshadri R."/>
            <person name="Voytek M.A."/>
        </authorList>
    </citation>
    <scope>NUCLEOTIDE SEQUENCE [LARGE SCALE GENOMIC DNA]</scope>
    <source>
        <strain>DSM 14350 / EX-H1</strain>
    </source>
</reference>
<accession>C0QT62</accession>
<organism>
    <name type="scientific">Persephonella marina (strain DSM 14350 / EX-H1)</name>
    <dbReference type="NCBI Taxonomy" id="123214"/>
    <lineage>
        <taxon>Bacteria</taxon>
        <taxon>Pseudomonadati</taxon>
        <taxon>Aquificota</taxon>
        <taxon>Aquificia</taxon>
        <taxon>Aquificales</taxon>
        <taxon>Hydrogenothermaceae</taxon>
        <taxon>Persephonella</taxon>
    </lineage>
</organism>
<dbReference type="EMBL" id="CP001230">
    <property type="protein sequence ID" value="ACO03195.1"/>
    <property type="molecule type" value="Genomic_DNA"/>
</dbReference>
<dbReference type="RefSeq" id="WP_012675434.1">
    <property type="nucleotide sequence ID" value="NC_012440.1"/>
</dbReference>
<dbReference type="SMR" id="C0QT62"/>
<dbReference type="STRING" id="123214.PERMA_0079"/>
<dbReference type="PaxDb" id="123214-PERMA_0079"/>
<dbReference type="KEGG" id="pmx:PERMA_0079"/>
<dbReference type="eggNOG" id="COG0217">
    <property type="taxonomic scope" value="Bacteria"/>
</dbReference>
<dbReference type="HOGENOM" id="CLU_062974_2_2_0"/>
<dbReference type="OrthoDB" id="9781053at2"/>
<dbReference type="Proteomes" id="UP000001366">
    <property type="component" value="Chromosome"/>
</dbReference>
<dbReference type="GO" id="GO:0005829">
    <property type="term" value="C:cytosol"/>
    <property type="evidence" value="ECO:0007669"/>
    <property type="project" value="TreeGrafter"/>
</dbReference>
<dbReference type="GO" id="GO:0003677">
    <property type="term" value="F:DNA binding"/>
    <property type="evidence" value="ECO:0007669"/>
    <property type="project" value="UniProtKB-UniRule"/>
</dbReference>
<dbReference type="GO" id="GO:0006355">
    <property type="term" value="P:regulation of DNA-templated transcription"/>
    <property type="evidence" value="ECO:0007669"/>
    <property type="project" value="UniProtKB-UniRule"/>
</dbReference>
<dbReference type="FunFam" id="1.10.10.200:FF:000001">
    <property type="entry name" value="Probable transcriptional regulatory protein YebC"/>
    <property type="match status" value="1"/>
</dbReference>
<dbReference type="FunFam" id="3.30.70.980:FF:000002">
    <property type="entry name" value="Probable transcriptional regulatory protein YebC"/>
    <property type="match status" value="1"/>
</dbReference>
<dbReference type="Gene3D" id="1.10.10.200">
    <property type="match status" value="1"/>
</dbReference>
<dbReference type="Gene3D" id="3.30.70.980">
    <property type="match status" value="2"/>
</dbReference>
<dbReference type="HAMAP" id="MF_00693">
    <property type="entry name" value="Transcrip_reg_TACO1"/>
    <property type="match status" value="1"/>
</dbReference>
<dbReference type="InterPro" id="IPR017856">
    <property type="entry name" value="Integrase-like_N"/>
</dbReference>
<dbReference type="InterPro" id="IPR048300">
    <property type="entry name" value="TACO1_YebC-like_2nd/3rd_dom"/>
</dbReference>
<dbReference type="InterPro" id="IPR049083">
    <property type="entry name" value="TACO1_YebC_N"/>
</dbReference>
<dbReference type="InterPro" id="IPR002876">
    <property type="entry name" value="Transcrip_reg_TACO1-like"/>
</dbReference>
<dbReference type="InterPro" id="IPR026564">
    <property type="entry name" value="Transcrip_reg_TACO1-like_dom3"/>
</dbReference>
<dbReference type="InterPro" id="IPR029072">
    <property type="entry name" value="YebC-like"/>
</dbReference>
<dbReference type="NCBIfam" id="NF001030">
    <property type="entry name" value="PRK00110.1"/>
    <property type="match status" value="1"/>
</dbReference>
<dbReference type="NCBIfam" id="NF009044">
    <property type="entry name" value="PRK12378.1"/>
    <property type="match status" value="1"/>
</dbReference>
<dbReference type="NCBIfam" id="TIGR01033">
    <property type="entry name" value="YebC/PmpR family DNA-binding transcriptional regulator"/>
    <property type="match status" value="1"/>
</dbReference>
<dbReference type="PANTHER" id="PTHR12532:SF6">
    <property type="entry name" value="TRANSCRIPTIONAL REGULATORY PROTEIN YEBC-RELATED"/>
    <property type="match status" value="1"/>
</dbReference>
<dbReference type="PANTHER" id="PTHR12532">
    <property type="entry name" value="TRANSLATIONAL ACTIVATOR OF CYTOCHROME C OXIDASE 1"/>
    <property type="match status" value="1"/>
</dbReference>
<dbReference type="Pfam" id="PF20772">
    <property type="entry name" value="TACO1_YebC_N"/>
    <property type="match status" value="1"/>
</dbReference>
<dbReference type="Pfam" id="PF01709">
    <property type="entry name" value="Transcrip_reg"/>
    <property type="match status" value="1"/>
</dbReference>
<dbReference type="SUPFAM" id="SSF75625">
    <property type="entry name" value="YebC-like"/>
    <property type="match status" value="1"/>
</dbReference>
<keyword id="KW-0963">Cytoplasm</keyword>
<keyword id="KW-0238">DNA-binding</keyword>
<keyword id="KW-1185">Reference proteome</keyword>
<keyword id="KW-0804">Transcription</keyword>
<keyword id="KW-0805">Transcription regulation</keyword>
<protein>
    <recommendedName>
        <fullName evidence="1">Probable transcriptional regulatory protein PERMA_0079</fullName>
    </recommendedName>
</protein>
<sequence>MAGHSKWHNIRHKKAKMDAKRGQMFTKIIREITVAARQGGGDPEFNPRLRIAIEKAKKANMPVENIERAIKRGTGELEGVSYEEVVYEGYGPEGVAIIVECLTDNRNRTTGEVRHIFTKHGGNLGSSGCVSFLFEEKGVILVPKDKYDEETVFEKAIEAGAEDVITDDEEFYEIRTEPKELYTVKENLEKEGIEIEKAELTRIPTTTVEINDEETATKLMKLLDALEDNDDVQKVYSNFEMSQQLMEKVS</sequence>
<evidence type="ECO:0000255" key="1">
    <source>
        <dbReference type="HAMAP-Rule" id="MF_00693"/>
    </source>
</evidence>
<comment type="subcellular location">
    <subcellularLocation>
        <location evidence="1">Cytoplasm</location>
    </subcellularLocation>
</comment>
<comment type="similarity">
    <text evidence="1">Belongs to the TACO1 family.</text>
</comment>
<feature type="chain" id="PRO_1000200105" description="Probable transcriptional regulatory protein PERMA_0079">
    <location>
        <begin position="1"/>
        <end position="250"/>
    </location>
</feature>